<protein>
    <recommendedName>
        <fullName evidence="16 18">Fumarate hydratase, mitochondrial</fullName>
        <shortName evidence="18 19 20">Fumarase</shortName>
        <shortName evidence="17">HsFH</shortName>
        <ecNumber evidence="12">4.2.1.2</ecNumber>
    </recommendedName>
</protein>
<gene>
    <name evidence="18 23" type="primary">FH</name>
</gene>
<proteinExistence type="evidence at protein level"/>
<reference key="1">
    <citation type="submission" date="1996-05" db="EMBL/GenBank/DDBJ databases">
        <authorList>
            <person name="Gellera C."/>
            <person name="Baratta S."/>
            <person name="Cavadini P."/>
            <person name="Invernizzi F."/>
            <person name="Lamantea E."/>
            <person name="Didonato S."/>
            <person name="Taroni F."/>
        </authorList>
    </citation>
    <scope>NUCLEOTIDE SEQUENCE [MRNA]</scope>
    <source>
        <tissue>Brain</tissue>
    </source>
</reference>
<reference key="2">
    <citation type="submission" date="1996-02" db="EMBL/GenBank/DDBJ databases">
        <title>Complete cDNA sequence of the human fumarase.</title>
        <authorList>
            <person name="Bourgeron T."/>
            <person name="Parfait B."/>
            <person name="Chretien D."/>
            <person name="Rotig A."/>
            <person name="Munnich A."/>
            <person name="Rustin P."/>
        </authorList>
    </citation>
    <scope>NUCLEOTIDE SEQUENCE [MRNA]</scope>
</reference>
<reference key="3">
    <citation type="submission" date="2003-08" db="EMBL/GenBank/DDBJ databases">
        <title>Cloning of human full-length CDSs in BD Creator(TM) system donor vector.</title>
        <authorList>
            <person name="Kalnine N."/>
            <person name="Chen X."/>
            <person name="Rolfs A."/>
            <person name="Halleck A."/>
            <person name="Hines L."/>
            <person name="Eisenstein S."/>
            <person name="Koundinya M."/>
            <person name="Raphael J."/>
            <person name="Moreira D."/>
            <person name="Kelley T."/>
            <person name="LaBaer J."/>
            <person name="Lin Y."/>
            <person name="Phelan M."/>
            <person name="Farmer A."/>
        </authorList>
    </citation>
    <scope>NUCLEOTIDE SEQUENCE [LARGE SCALE MRNA]</scope>
</reference>
<reference key="4">
    <citation type="journal article" date="2004" name="Nat. Genet.">
        <title>Complete sequencing and characterization of 21,243 full-length human cDNAs.</title>
        <authorList>
            <person name="Ota T."/>
            <person name="Suzuki Y."/>
            <person name="Nishikawa T."/>
            <person name="Otsuki T."/>
            <person name="Sugiyama T."/>
            <person name="Irie R."/>
            <person name="Wakamatsu A."/>
            <person name="Hayashi K."/>
            <person name="Sato H."/>
            <person name="Nagai K."/>
            <person name="Kimura K."/>
            <person name="Makita H."/>
            <person name="Sekine M."/>
            <person name="Obayashi M."/>
            <person name="Nishi T."/>
            <person name="Shibahara T."/>
            <person name="Tanaka T."/>
            <person name="Ishii S."/>
            <person name="Yamamoto J."/>
            <person name="Saito K."/>
            <person name="Kawai Y."/>
            <person name="Isono Y."/>
            <person name="Nakamura Y."/>
            <person name="Nagahari K."/>
            <person name="Murakami K."/>
            <person name="Yasuda T."/>
            <person name="Iwayanagi T."/>
            <person name="Wagatsuma M."/>
            <person name="Shiratori A."/>
            <person name="Sudo H."/>
            <person name="Hosoiri T."/>
            <person name="Kaku Y."/>
            <person name="Kodaira H."/>
            <person name="Kondo H."/>
            <person name="Sugawara M."/>
            <person name="Takahashi M."/>
            <person name="Kanda K."/>
            <person name="Yokoi T."/>
            <person name="Furuya T."/>
            <person name="Kikkawa E."/>
            <person name="Omura Y."/>
            <person name="Abe K."/>
            <person name="Kamihara K."/>
            <person name="Katsuta N."/>
            <person name="Sato K."/>
            <person name="Tanikawa M."/>
            <person name="Yamazaki M."/>
            <person name="Ninomiya K."/>
            <person name="Ishibashi T."/>
            <person name="Yamashita H."/>
            <person name="Murakawa K."/>
            <person name="Fujimori K."/>
            <person name="Tanai H."/>
            <person name="Kimata M."/>
            <person name="Watanabe M."/>
            <person name="Hiraoka S."/>
            <person name="Chiba Y."/>
            <person name="Ishida S."/>
            <person name="Ono Y."/>
            <person name="Takiguchi S."/>
            <person name="Watanabe S."/>
            <person name="Yosida M."/>
            <person name="Hotuta T."/>
            <person name="Kusano J."/>
            <person name="Kanehori K."/>
            <person name="Takahashi-Fujii A."/>
            <person name="Hara H."/>
            <person name="Tanase T.-O."/>
            <person name="Nomura Y."/>
            <person name="Togiya S."/>
            <person name="Komai F."/>
            <person name="Hara R."/>
            <person name="Takeuchi K."/>
            <person name="Arita M."/>
            <person name="Imose N."/>
            <person name="Musashino K."/>
            <person name="Yuuki H."/>
            <person name="Oshima A."/>
            <person name="Sasaki N."/>
            <person name="Aotsuka S."/>
            <person name="Yoshikawa Y."/>
            <person name="Matsunawa H."/>
            <person name="Ichihara T."/>
            <person name="Shiohata N."/>
            <person name="Sano S."/>
            <person name="Moriya S."/>
            <person name="Momiyama H."/>
            <person name="Satoh N."/>
            <person name="Takami S."/>
            <person name="Terashima Y."/>
            <person name="Suzuki O."/>
            <person name="Nakagawa S."/>
            <person name="Senoh A."/>
            <person name="Mizoguchi H."/>
            <person name="Goto Y."/>
            <person name="Shimizu F."/>
            <person name="Wakebe H."/>
            <person name="Hishigaki H."/>
            <person name="Watanabe T."/>
            <person name="Sugiyama A."/>
            <person name="Takemoto M."/>
            <person name="Kawakami B."/>
            <person name="Yamazaki M."/>
            <person name="Watanabe K."/>
            <person name="Kumagai A."/>
            <person name="Itakura S."/>
            <person name="Fukuzumi Y."/>
            <person name="Fujimori Y."/>
            <person name="Komiyama M."/>
            <person name="Tashiro H."/>
            <person name="Tanigami A."/>
            <person name="Fujiwara T."/>
            <person name="Ono T."/>
            <person name="Yamada K."/>
            <person name="Fujii Y."/>
            <person name="Ozaki K."/>
            <person name="Hirao M."/>
            <person name="Ohmori Y."/>
            <person name="Kawabata A."/>
            <person name="Hikiji T."/>
            <person name="Kobatake N."/>
            <person name="Inagaki H."/>
            <person name="Ikema Y."/>
            <person name="Okamoto S."/>
            <person name="Okitani R."/>
            <person name="Kawakami T."/>
            <person name="Noguchi S."/>
            <person name="Itoh T."/>
            <person name="Shigeta K."/>
            <person name="Senba T."/>
            <person name="Matsumura K."/>
            <person name="Nakajima Y."/>
            <person name="Mizuno T."/>
            <person name="Morinaga M."/>
            <person name="Sasaki M."/>
            <person name="Togashi T."/>
            <person name="Oyama M."/>
            <person name="Hata H."/>
            <person name="Watanabe M."/>
            <person name="Komatsu T."/>
            <person name="Mizushima-Sugano J."/>
            <person name="Satoh T."/>
            <person name="Shirai Y."/>
            <person name="Takahashi Y."/>
            <person name="Nakagawa K."/>
            <person name="Okumura K."/>
            <person name="Nagase T."/>
            <person name="Nomura N."/>
            <person name="Kikuchi H."/>
            <person name="Masuho Y."/>
            <person name="Yamashita R."/>
            <person name="Nakai K."/>
            <person name="Yada T."/>
            <person name="Nakamura Y."/>
            <person name="Ohara O."/>
            <person name="Isogai T."/>
            <person name="Sugano S."/>
        </authorList>
    </citation>
    <scope>NUCLEOTIDE SEQUENCE [LARGE SCALE MRNA]</scope>
    <source>
        <tissue>Brain</tissue>
    </source>
</reference>
<reference key="5">
    <citation type="submission" date="2005-07" db="EMBL/GenBank/DDBJ databases">
        <authorList>
            <person name="Mural R.J."/>
            <person name="Istrail S."/>
            <person name="Sutton G."/>
            <person name="Florea L."/>
            <person name="Halpern A.L."/>
            <person name="Mobarry C.M."/>
            <person name="Lippert R."/>
            <person name="Walenz B."/>
            <person name="Shatkay H."/>
            <person name="Dew I."/>
            <person name="Miller J.R."/>
            <person name="Flanigan M.J."/>
            <person name="Edwards N.J."/>
            <person name="Bolanos R."/>
            <person name="Fasulo D."/>
            <person name="Halldorsson B.V."/>
            <person name="Hannenhalli S."/>
            <person name="Turner R."/>
            <person name="Yooseph S."/>
            <person name="Lu F."/>
            <person name="Nusskern D.R."/>
            <person name="Shue B.C."/>
            <person name="Zheng X.H."/>
            <person name="Zhong F."/>
            <person name="Delcher A.L."/>
            <person name="Huson D.H."/>
            <person name="Kravitz S.A."/>
            <person name="Mouchard L."/>
            <person name="Reinert K."/>
            <person name="Remington K.A."/>
            <person name="Clark A.G."/>
            <person name="Waterman M.S."/>
            <person name="Eichler E.E."/>
            <person name="Adams M.D."/>
            <person name="Hunkapiller M.W."/>
            <person name="Myers E.W."/>
            <person name="Venter J.C."/>
        </authorList>
    </citation>
    <scope>NUCLEOTIDE SEQUENCE [LARGE SCALE GENOMIC DNA]</scope>
</reference>
<reference key="6">
    <citation type="journal article" date="2004" name="Genome Res.">
        <title>The status, quality, and expansion of the NIH full-length cDNA project: the Mammalian Gene Collection (MGC).</title>
        <authorList>
            <consortium name="The MGC Project Team"/>
        </authorList>
    </citation>
    <scope>NUCLEOTIDE SEQUENCE [LARGE SCALE MRNA]</scope>
    <source>
        <tissue>Brain</tissue>
        <tissue>Uterus</tissue>
    </source>
</reference>
<reference key="7">
    <citation type="journal article" date="1986" name="Biosci. Rep.">
        <title>Nucleotide sequence of a cDNA coding for mitochondrial fumarase from human liver.</title>
        <authorList>
            <person name="Kinsella B.T."/>
            <person name="Doonan S."/>
        </authorList>
    </citation>
    <scope>NUCLEOTIDE SEQUENCE [MRNA] OF 44-510</scope>
    <source>
        <tissue>Liver</tissue>
    </source>
</reference>
<reference key="8">
    <citation type="submission" date="2007-03" db="UniProtKB">
        <authorList>
            <person name="Lubec G."/>
            <person name="Afjehi-Sadat L."/>
        </authorList>
    </citation>
    <scope>PROTEIN SEQUENCE OF 269-286 AND 422-444</scope>
    <scope>IDENTIFICATION BY MASS SPECTROMETRY</scope>
    <source>
        <tissue>Brain</tissue>
        <tissue>Cajal-Retzius cell</tissue>
    </source>
</reference>
<reference key="9">
    <citation type="journal article" date="2016" name="Traffic">
        <title>Human fumarate hydratase is dual localized by an alternative transcription initiation mechanism.</title>
        <authorList>
            <person name="Dik E."/>
            <person name="Naamati A."/>
            <person name="Asraf H."/>
            <person name="Lehming N."/>
            <person name="Pines O."/>
        </authorList>
    </citation>
    <scope>PARTIAL PROTEIN SEQUENCE (ISOFORM CYTOPLASMIC)</scope>
    <scope>CLEAVAGE OF INITIATOR METHIONINE (ISOFORM CYTOPLASMIC)</scope>
    <scope>ALTERNATIVE INITIATION (ISOFORMS MITOCHONDRIAL AND CYTOPLASMIC)</scope>
    <scope>SUBCELLULAR LOCATION (ISOFORMS MITOCHONDRIAL AND CYTOPLASMIC)</scope>
</reference>
<reference key="10">
    <citation type="journal article" date="2009" name="Science">
        <title>Lysine acetylation targets protein complexes and co-regulates major cellular functions.</title>
        <authorList>
            <person name="Choudhary C."/>
            <person name="Kumar C."/>
            <person name="Gnad F."/>
            <person name="Nielsen M.L."/>
            <person name="Rehman M."/>
            <person name="Walther T.C."/>
            <person name="Olsen J.V."/>
            <person name="Mann M."/>
        </authorList>
    </citation>
    <scope>ACETYLATION [LARGE SCALE ANALYSIS] AT LYS-66; LYS-80; LYS-94; LYS-256 AND LYS-292</scope>
    <scope>IDENTIFICATION BY MASS SPECTROMETRY [LARGE SCALE ANALYSIS]</scope>
</reference>
<reference key="11">
    <citation type="journal article" date="2010" name="PLoS Biol.">
        <title>Fumarase: a mitochondrial metabolic enzyme and a cytosolic/nuclear component of the DNA damage response.</title>
        <authorList>
            <person name="Yogev O."/>
            <person name="Yogev O."/>
            <person name="Singer E."/>
            <person name="Shaulian E."/>
            <person name="Goldberg M."/>
            <person name="Fox T.D."/>
            <person name="Pines O."/>
        </authorList>
    </citation>
    <scope>FUNCTION (ISOFORM CYTOPLASMIC)</scope>
    <scope>SUBCELLULAR LOCATION (ISOFORM CYTOPLASMIC)</scope>
</reference>
<reference key="12">
    <citation type="journal article" date="2011" name="BMC Syst. Biol.">
        <title>Initial characterization of the human central proteome.</title>
        <authorList>
            <person name="Burkard T.R."/>
            <person name="Planyavsky M."/>
            <person name="Kaupe I."/>
            <person name="Breitwieser F.P."/>
            <person name="Buerckstuemmer T."/>
            <person name="Bennett K.L."/>
            <person name="Superti-Furga G."/>
            <person name="Colinge J."/>
        </authorList>
    </citation>
    <scope>IDENTIFICATION BY MASS SPECTROMETRY [LARGE SCALE ANALYSIS]</scope>
</reference>
<reference key="13">
    <citation type="journal article" date="2012" name="PLoS ONE">
        <title>Assessment of the red cell proteome of young patients with unexplained hemolytic anemia by two-dimensional differential in-gel electrophoresis (DIGE).</title>
        <authorList>
            <person name="von Lohneysen K."/>
            <person name="Scott T.M."/>
            <person name="Soldau K."/>
            <person name="Xu X."/>
            <person name="Friedman J.S."/>
        </authorList>
    </citation>
    <scope>TISSUE SPECIFICITY</scope>
    <scope>SUBCELLULAR LOCATION</scope>
</reference>
<reference key="14">
    <citation type="journal article" date="2012" name="Proc. Natl. Acad. Sci. U.S.A.">
        <title>N-terminal acetylome analyses and functional insights of the N-terminal acetyltransferase NatB.</title>
        <authorList>
            <person name="Van Damme P."/>
            <person name="Lasa M."/>
            <person name="Polevoda B."/>
            <person name="Gazquez C."/>
            <person name="Elosegui-Artola A."/>
            <person name="Kim D.S."/>
            <person name="De Juan-Pardo E."/>
            <person name="Demeyer K."/>
            <person name="Hole K."/>
            <person name="Larrea E."/>
            <person name="Timmerman E."/>
            <person name="Prieto J."/>
            <person name="Arnesen T."/>
            <person name="Sherman F."/>
            <person name="Gevaert K."/>
            <person name="Aldabe R."/>
        </authorList>
    </citation>
    <scope>IDENTIFICATION BY MASS SPECTROMETRY [LARGE SCALE ANALYSIS]</scope>
</reference>
<reference key="15">
    <citation type="journal article" date="2013" name="J. Proteome Res.">
        <title>Toward a comprehensive characterization of a human cancer cell phosphoproteome.</title>
        <authorList>
            <person name="Zhou H."/>
            <person name="Di Palma S."/>
            <person name="Preisinger C."/>
            <person name="Peng M."/>
            <person name="Polat A.N."/>
            <person name="Heck A.J."/>
            <person name="Mohammed S."/>
        </authorList>
    </citation>
    <scope>PHOSPHORYLATION [LARGE SCALE ANALYSIS] AT THR-90</scope>
    <scope>IDENTIFICATION BY MASS SPECTROMETRY [LARGE SCALE ANALYSIS]</scope>
    <source>
        <tissue>Erythroleukemia</tissue>
    </source>
</reference>
<reference key="16">
    <citation type="journal article" date="2014" name="J. Proteomics">
        <title>An enzyme assisted RP-RPLC approach for in-depth analysis of human liver phosphoproteome.</title>
        <authorList>
            <person name="Bian Y."/>
            <person name="Song C."/>
            <person name="Cheng K."/>
            <person name="Dong M."/>
            <person name="Wang F."/>
            <person name="Huang J."/>
            <person name="Sun D."/>
            <person name="Wang L."/>
            <person name="Ye M."/>
            <person name="Zou H."/>
        </authorList>
    </citation>
    <scope>PHOSPHORYLATION [LARGE SCALE ANALYSIS] AT SER-366</scope>
    <scope>IDENTIFICATION BY MASS SPECTROMETRY [LARGE SCALE ANALYSIS]</scope>
    <source>
        <tissue>Liver</tissue>
    </source>
</reference>
<reference key="17">
    <citation type="journal article" date="2015" name="Nat. Cell Biol.">
        <title>Local generation of fumarate promotes DNA repair through inhibition of histone H3 demethylation.</title>
        <authorList>
            <person name="Jiang Y."/>
            <person name="Qian X."/>
            <person name="Shen J."/>
            <person name="Wang Y."/>
            <person name="Li X."/>
            <person name="Liu R."/>
            <person name="Xia Y."/>
            <person name="Chen Q."/>
            <person name="Peng G."/>
            <person name="Lin S.Y."/>
            <person name="Lu Z."/>
        </authorList>
    </citation>
    <scope>FUNCTION</scope>
    <scope>CATALYTIC ACTIVITY</scope>
    <scope>SUBCELLULAR LOCATION</scope>
    <scope>INTERACTION WITH H2AZ1</scope>
    <scope>PHOSPHORYLATION AT THR-236</scope>
    <scope>MUTAGENESIS OF SER-46; THR-147; SER-187 AND THR-236</scope>
    <scope>CHARACTERIZATION OF VARIANT HLRCC HIS-233</scope>
</reference>
<reference key="18">
    <citation type="journal article" date="2015" name="Proteomics">
        <title>N-terminome analysis of the human mitochondrial proteome.</title>
        <authorList>
            <person name="Vaca Jacome A.S."/>
            <person name="Rabilloud T."/>
            <person name="Schaeffer-Reiss C."/>
            <person name="Rompais M."/>
            <person name="Ayoub D."/>
            <person name="Lane L."/>
            <person name="Bairoch A."/>
            <person name="Van Dorsselaer A."/>
            <person name="Carapito C."/>
        </authorList>
    </citation>
    <scope>IDENTIFICATION BY MASS SPECTROMETRY [LARGE SCALE ANALYSIS]</scope>
</reference>
<reference key="19">
    <citation type="journal article" date="2019" name="Nat. Chem. Biol.">
        <title>A chemoproteomic portrait of the oncometabolite fumarate.</title>
        <authorList>
            <person name="Kulkarni R.A."/>
            <person name="Bak D.W."/>
            <person name="Wei D."/>
            <person name="Bergholtz S.E."/>
            <person name="Briney C.A."/>
            <person name="Shrimp J.H."/>
            <person name="Alpsoy A."/>
            <person name="Thorpe A.L."/>
            <person name="Bavari A.E."/>
            <person name="Crooks D.R."/>
            <person name="Levy M."/>
            <person name="Florens L."/>
            <person name="Washburn M.P."/>
            <person name="Frizzell N."/>
            <person name="Dykhuizen E.C."/>
            <person name="Weerapana E."/>
            <person name="Linehan W.M."/>
            <person name="Meier J.L."/>
        </authorList>
    </citation>
    <scope>CATALYTIC ACTIVITY</scope>
    <scope>INVOLVEMENT IN HLRCC</scope>
</reference>
<reference evidence="24" key="20">
    <citation type="journal article" date="2011" name="J. Inherit. Metab. Dis.">
        <title>Structural basis of fumarate hydratase deficiency.</title>
        <authorList>
            <person name="Picaud S."/>
            <person name="Kavanagh K.L."/>
            <person name="Yue W.W."/>
            <person name="Lee W.H."/>
            <person name="Muller-Knapp S."/>
            <person name="Gileadi O."/>
            <person name="Sacchettini J."/>
            <person name="Oppermann U."/>
        </authorList>
    </citation>
    <scope>X-RAY CRYSTALLOGRAPHY (1.95 ANGSTROMS) OF 44-510</scope>
    <scope>SUBUNIT</scope>
</reference>
<reference evidence="25" key="21">
    <citation type="journal article" date="2014" name="Acta Crystallogr. F">
        <title>Cloning, expression, purification, crystallization and preliminary X-ray diffraction analysis of recombinant human fumarase.</title>
        <authorList>
            <person name="Pereira de Padua R.A."/>
            <person name="Nonato M.C."/>
        </authorList>
    </citation>
    <scope>X-RAY CRYSTALLOGRAPHY (2.10 ANGSTROMS) OF 49-510</scope>
</reference>
<reference evidence="26" key="22">
    <citation type="journal article" date="2019" name="FEBS J.">
        <title>Structural, biochemical and biophysical characterization of recombinant human fumarate hydratase.</title>
        <authorList>
            <person name="Ajalla Aleixo M.A."/>
            <person name="Rangel V.L."/>
            <person name="Rustiguel J.K."/>
            <person name="de Padua R.A.P."/>
            <person name="Nonato M.C."/>
        </authorList>
    </citation>
    <scope>X-RAY CRYSTALLOGRAPHY (1.80 ANGSTROMS) OF 45-510</scope>
    <scope>FUNCTION</scope>
    <scope>CATALYTIC ACTIVITY</scope>
    <scope>BIOPHYSICOCHEMICAL PROPERTIES</scope>
</reference>
<reference key="23">
    <citation type="journal article" date="1993" name="Am. J. Hum. Genet.">
        <title>Identification of a molecular defect in a fumarase deficient patient and mapping of the fumarase gene.</title>
        <authorList>
            <person name="Coughlin E.M."/>
            <person name="Chalmers R.A."/>
            <person name="Slaugenhaupt S.A."/>
            <person name="Gusella J.F."/>
            <person name="Shih V.E."/>
            <person name="Ramesh V."/>
        </authorList>
    </citation>
    <scope>VARIANT FMRD THR-308</scope>
</reference>
<reference key="24">
    <citation type="journal article" date="1994" name="J. Clin. Invest.">
        <title>Mutation of the fumarase gene in two siblings with progressive encephalopathy and fumarase deficiency.</title>
        <authorList>
            <person name="Bourgeron T."/>
            <person name="Chretien D."/>
            <person name="Poggi-Bach J."/>
            <person name="Doonan S."/>
            <person name="Rabier D."/>
            <person name="Letouze P."/>
            <person name="Munnich A."/>
            <person name="Roetig A."/>
            <person name="Landrieu P."/>
            <person name="Rustin P."/>
        </authorList>
    </citation>
    <scope>VARIANT HLRCC GLN-362</scope>
</reference>
<reference key="25">
    <citation type="journal article" date="1998" name="Mol. Genet. Metab.">
        <title>Molecular analysis and prenatal diagnosis of human fumarase deficiency.</title>
        <authorList>
            <person name="Coughlin E.M."/>
            <person name="Christensen E."/>
            <person name="Kunz P.L."/>
            <person name="Krishnamoorthy K.S."/>
            <person name="Walker V."/>
            <person name="Dennis N.R."/>
            <person name="Chalmers R.A."/>
            <person name="Elpeleg O.N."/>
            <person name="Whelan D."/>
            <person name="Pollitt R.J."/>
            <person name="Ramesh V."/>
            <person name="Mandell R."/>
            <person name="Shih V.E."/>
        </authorList>
    </citation>
    <scope>VARIANTS FMRD ARG-230; THR-308; CYS-312 AND VAL-425</scope>
</reference>
<reference key="26">
    <citation type="journal article" date="2002" name="Nat. Genet.">
        <title>Germline mutations in FH predispose to dominantly inherited uterine fibroids, skin leiomyomata and papillary renal cell cancer.</title>
        <authorList>
            <person name="Tomlinson I.P.M."/>
            <person name="Alam N.A."/>
            <person name="Rowan A.J."/>
            <person name="Barclay E."/>
            <person name="Jaeger E.E.M."/>
            <person name="Kelsell D."/>
            <person name="Leigh I."/>
            <person name="Gorman P."/>
            <person name="Lamlum H."/>
            <person name="Rahman S."/>
            <person name="Roylance R.R."/>
            <person name="Olpin S."/>
            <person name="Bevan S."/>
            <person name="Barker K."/>
            <person name="Hearle N."/>
            <person name="Houlston R.S."/>
            <person name="Kiuru M."/>
            <person name="Lehtonen R."/>
            <person name="Karhu A."/>
            <person name="Vilkki S."/>
            <person name="Laiho P."/>
            <person name="Eklund C."/>
            <person name="Vierimaa O."/>
            <person name="Aittomaeki K."/>
            <person name="Hietala M."/>
            <person name="Sistonen P."/>
            <person name="Paetau A."/>
            <person name="Salovaara R."/>
            <person name="Herva R."/>
            <person name="Launonen V."/>
            <person name="Aaltonen L.A."/>
        </authorList>
    </citation>
    <scope>VARIANTS HLRCC THR-107; PRO-117; ARG-180; ARG-185; ARG-230; HIS-233; VAL-282 AND ARG-328</scope>
</reference>
<accession>P07954</accession>
<accession>B1ANK7</accession>
<organism>
    <name type="scientific">Homo sapiens</name>
    <name type="common">Human</name>
    <dbReference type="NCBI Taxonomy" id="9606"/>
    <lineage>
        <taxon>Eukaryota</taxon>
        <taxon>Metazoa</taxon>
        <taxon>Chordata</taxon>
        <taxon>Craniata</taxon>
        <taxon>Vertebrata</taxon>
        <taxon>Euteleostomi</taxon>
        <taxon>Mammalia</taxon>
        <taxon>Eutheria</taxon>
        <taxon>Euarchontoglires</taxon>
        <taxon>Primates</taxon>
        <taxon>Haplorrhini</taxon>
        <taxon>Catarrhini</taxon>
        <taxon>Hominidae</taxon>
        <taxon>Homo</taxon>
    </lineage>
</organism>
<keyword id="KW-0002">3D-structure</keyword>
<keyword id="KW-0007">Acetylation</keyword>
<keyword id="KW-0024">Alternative initiation</keyword>
<keyword id="KW-0158">Chromosome</keyword>
<keyword id="KW-0963">Cytoplasm</keyword>
<keyword id="KW-0903">Direct protein sequencing</keyword>
<keyword id="KW-0225">Disease variant</keyword>
<keyword id="KW-0227">DNA damage</keyword>
<keyword id="KW-0234">DNA repair</keyword>
<keyword id="KW-0456">Lyase</keyword>
<keyword id="KW-0496">Mitochondrion</keyword>
<keyword id="KW-0539">Nucleus</keyword>
<keyword id="KW-0597">Phosphoprotein</keyword>
<keyword id="KW-1267">Proteomics identification</keyword>
<keyword id="KW-1185">Reference proteome</keyword>
<keyword id="KW-0809">Transit peptide</keyword>
<keyword id="KW-0816">Tricarboxylic acid cycle</keyword>
<keyword id="KW-0043">Tumor suppressor</keyword>
<sequence>MYRALRLLARSRPLVRAPAAALASAPGLGGAAVPSFWPPNAARMASQNSFRIEYDTFGELKVPNDKYYGAQTVRSTMNFKIGGVTERMPTPVIKAFGILKRAAAEVNQDYGLDPKIANAIMKAADEVAEGKLNDHFPLVVWQTGSGTQTNMNVNEVISNRAIEMLGGELGSKIPVHPNDHVNKSQSSNDTFPTAMHIAAAIEVHEVLLPGLQKLHDALDAKSKEFAQIIKIGRTHTQDAVPLTLGQEFSGYVQQVKYAMTRIKAAMPRIYELAAGGTAVGTGLNTRIGFAEKVAAKVAALTGLPFVTAPNKFEALAAHDALVELSGAMNTTACSLMKIANDIRFLGSGPRSGLGELILPENEPGSSIMPGKVNPTQCEAMTMVAAQVMGNHVAVTVGGSNGHFELNVFKPMMIKNVLHSARLLGDASVSFTENCVVGIQANTERINKLMNESLMLVTALNPHIGYDKAAKIAKTAHKNGSTLKETAIELGYLTAEQFDEWVKPKDMLGPK</sequence>
<name>FUMH_HUMAN</name>
<comment type="function">
    <text evidence="12 21">Catalyzes the reversible stereospecific interconversion of fumarate to L-malate (PubMed:30761759). Experiments in other species have demonstrated that specific isoforms of this protein act in defined pathways and favor one direction over the other (Probable).</text>
</comment>
<comment type="function">
    <molecule>Isoform Mitochondrial</molecule>
    <text evidence="2">Catalyzes the hydration of fumarate to L-malate in the tricarboxylic acid (TCA) cycle to facilitate a transition step in the production of energy in the form of NADH.</text>
</comment>
<comment type="function">
    <molecule>Isoform Cytoplasmic</molecule>
    <text evidence="3 6 9">Catalyzes the dehydration of L-malate to fumarate (By similarity). Fumarate metabolism in the cytosol plays a role during urea cycle and arginine metabolism; fumarate being a by-product of the urea cycle and amino-acid catabolism (By similarity). Also plays a role in DNA repair by promoting non-homologous end-joining (NHEJ) (PubMed:20231875, PubMed:26237645). In response to DNA damage and phosphorylation by PRKDC, translocates to the nucleus and accumulates at DNA double-strand breaks (DSBs): acts by catalyzing formation of fumarate, an inhibitor of KDM2B histone demethylase activity, resulting in enhanced dimethylation of histone H3 'Lys-36' (H3K36me2) (PubMed:26237645).</text>
</comment>
<comment type="catalytic activity">
    <reaction evidence="12 22">
        <text>(S)-malate = fumarate + H2O</text>
        <dbReference type="Rhea" id="RHEA:12460"/>
        <dbReference type="ChEBI" id="CHEBI:15377"/>
        <dbReference type="ChEBI" id="CHEBI:15589"/>
        <dbReference type="ChEBI" id="CHEBI:29806"/>
        <dbReference type="EC" id="4.2.1.2"/>
    </reaction>
</comment>
<comment type="catalytic activity">
    <molecule>Isoform Mitochondrial</molecule>
    <reaction evidence="2">
        <text>(S)-malate = fumarate + H2O</text>
        <dbReference type="Rhea" id="RHEA:12460"/>
        <dbReference type="ChEBI" id="CHEBI:15377"/>
        <dbReference type="ChEBI" id="CHEBI:15589"/>
        <dbReference type="ChEBI" id="CHEBI:29806"/>
        <dbReference type="EC" id="4.2.1.2"/>
    </reaction>
    <physiologicalReaction direction="right-to-left" evidence="2">
        <dbReference type="Rhea" id="RHEA:12462"/>
    </physiologicalReaction>
</comment>
<comment type="catalytic activity">
    <molecule>Isoform Cytoplasmic</molecule>
    <reaction evidence="3">
        <text>(S)-malate = fumarate + H2O</text>
        <dbReference type="Rhea" id="RHEA:12460"/>
        <dbReference type="ChEBI" id="CHEBI:15377"/>
        <dbReference type="ChEBI" id="CHEBI:15589"/>
        <dbReference type="ChEBI" id="CHEBI:29806"/>
        <dbReference type="EC" id="4.2.1.2"/>
    </reaction>
    <physiologicalReaction direction="left-to-right" evidence="3">
        <dbReference type="Rhea" id="RHEA:12461"/>
    </physiologicalReaction>
</comment>
<comment type="biophysicochemical properties">
    <kinetics>
        <KM evidence="12">1.4 mM for L-malate (at pH 8.5)</KM>
        <KM evidence="12">0.2 mM for fumarate (at pH 8.5)</KM>
        <text evidence="12">kcat is 280 sec(-1) with L-malate (at pH 8.5) (PubMed:30761759). kcat is 170 sec(-1) with fumarate (at pH 8.5) (PubMed:30761759).</text>
    </kinetics>
    <phDependence>
        <text evidence="12">Optimum pH is 7.5-8.0.</text>
    </phDependence>
</comment>
<comment type="pathway">
    <text evidence="2">Carbohydrate metabolism; tricarboxylic acid cycle; (S)-malate from fumarate: step 1/1.</text>
</comment>
<comment type="subunit">
    <text evidence="7 9 12">Homotetramer (PubMed:21445611, PubMed:30761759). Interacts with H2AZ1 (PubMed:26237645).</text>
</comment>
<comment type="interaction">
    <interactant intactId="EBI-1050358">
        <id>P07954</id>
    </interactant>
    <interactant intactId="EBI-10171570">
        <id>Q68D86</id>
        <label>CCDC102B</label>
    </interactant>
    <organismsDiffer>false</organismsDiffer>
    <experiments>3</experiments>
</comment>
<comment type="interaction">
    <interactant intactId="EBI-1050358">
        <id>P07954</id>
    </interactant>
    <interactant intactId="EBI-10961624">
        <id>Q2TAC2-2</id>
        <label>CCDC57</label>
    </interactant>
    <organismsDiffer>false</organismsDiffer>
    <experiments>3</experiments>
</comment>
<comment type="interaction">
    <interactant intactId="EBI-1050358">
        <id>P07954</id>
    </interactant>
    <interactant intactId="EBI-13328871">
        <id>Q9H6J7-2</id>
        <label>CSTPP1</label>
    </interactant>
    <organismsDiffer>false</organismsDiffer>
    <experiments>3</experiments>
</comment>
<comment type="interaction">
    <interactant intactId="EBI-1050358">
        <id>P07954</id>
    </interactant>
    <interactant intactId="EBI-12206931">
        <id>Q14129</id>
        <label>DGCR6</label>
    </interactant>
    <organismsDiffer>false</organismsDiffer>
    <experiments>3</experiments>
</comment>
<comment type="interaction">
    <interactant intactId="EBI-1050358">
        <id>P07954</id>
    </interactant>
    <interactant intactId="EBI-371876">
        <id>Q9NQT4</id>
        <label>EXOSC5</label>
    </interactant>
    <organismsDiffer>false</organismsDiffer>
    <experiments>4</experiments>
</comment>
<comment type="interaction">
    <interactant intactId="EBI-1050358">
        <id>P07954</id>
    </interactant>
    <interactant intactId="EBI-1199859">
        <id>P0C0S5</id>
        <label>H2AZ1</label>
    </interactant>
    <organismsDiffer>false</organismsDiffer>
    <experiments>5</experiments>
</comment>
<comment type="interaction">
    <interactant intactId="EBI-1050358">
        <id>P07954</id>
    </interactant>
    <interactant intactId="EBI-6426464">
        <id>Q8WZ60</id>
        <label>KLHL6</label>
    </interactant>
    <organismsDiffer>false</organismsDiffer>
    <experiments>3</experiments>
</comment>
<comment type="interaction">
    <interactant intactId="EBI-1050358">
        <id>P07954</id>
    </interactant>
    <interactant intactId="EBI-2830427">
        <id>Q03252</id>
        <label>LMNB2</label>
    </interactant>
    <organismsDiffer>false</organismsDiffer>
    <experiments>3</experiments>
</comment>
<comment type="interaction">
    <interactant intactId="EBI-1050358">
        <id>P07954</id>
    </interactant>
    <interactant intactId="EBI-696621">
        <id>P11309</id>
        <label>PIM1</label>
    </interactant>
    <organismsDiffer>false</organismsDiffer>
    <experiments>3</experiments>
</comment>
<comment type="interaction">
    <interactant intactId="EBI-1050358">
        <id>P07954</id>
    </interactant>
    <interactant intactId="EBI-1055079">
        <id>O15160</id>
        <label>POLR1C</label>
    </interactant>
    <organismsDiffer>false</organismsDiffer>
    <experiments>3</experiments>
</comment>
<comment type="interaction">
    <interactant intactId="EBI-1050358">
        <id>P07954</id>
    </interactant>
    <interactant intactId="EBI-711613">
        <id>P21673</id>
        <label>SAT1</label>
    </interactant>
    <organismsDiffer>false</organismsDiffer>
    <experiments>3</experiments>
</comment>
<comment type="interaction">
    <interactant intactId="EBI-1050358">
        <id>P07954</id>
    </interactant>
    <interactant intactId="EBI-12076664">
        <id>O14787-2</id>
        <label>TNPO2</label>
    </interactant>
    <organismsDiffer>false</organismsDiffer>
    <experiments>3</experiments>
</comment>
<comment type="interaction">
    <interactant intactId="EBI-1050358">
        <id>P07954</id>
    </interactant>
    <interactant intactId="EBI-948354">
        <id>Q6DKK2</id>
        <label>TTC19</label>
    </interactant>
    <organismsDiffer>false</organismsDiffer>
    <experiments>3</experiments>
</comment>
<comment type="subcellular location">
    <molecule>Isoform Mitochondrial</molecule>
    <subcellularLocation>
        <location evidence="10">Mitochondrion</location>
    </subcellularLocation>
</comment>
<comment type="subcellular location">
    <molecule>Isoform Cytoplasmic</molecule>
    <subcellularLocation>
        <location evidence="6 8 9 10">Cytoplasm</location>
        <location evidence="6 8 9 10">Cytosol</location>
    </subcellularLocation>
    <subcellularLocation>
        <location evidence="6 9">Nucleus</location>
    </subcellularLocation>
    <subcellularLocation>
        <location evidence="9">Chromosome</location>
    </subcellularLocation>
    <text evidence="9">Translocates to the nucleus in response to DNA damage: localizes to DNA double-strand breaks (DSBs) following phosphorylation by PRKDC.</text>
</comment>
<comment type="alternative products">
    <event type="alternative initiation"/>
    <isoform>
        <id>P07954-1</id>
        <name evidence="18">Mitochondrial</name>
        <sequence type="displayed"/>
    </isoform>
    <isoform>
        <id>P07954-2</id>
        <name evidence="18">Cytoplasmic</name>
        <sequence type="described" ref="VSP_018965"/>
    </isoform>
</comment>
<comment type="tissue specificity">
    <text evidence="8">Expressed in red blood cells; underexpressed in red blood cells (cytoplasm) of patients with hereditary non-spherocytic hemolytic anemia of unknown etiology.</text>
</comment>
<comment type="PTM">
    <molecule>Isoform Cytoplasmic</molecule>
    <text evidence="9">Phosphorylation at Thr-236 by PRKDC in response to DNA damage promotes translocation to the nucleus and recruitment to DNA double-strand breaks (DSBs).</text>
</comment>
<comment type="disease" evidence="14 15">
    <disease id="DI-01638">
        <name>Fumarase deficiency</name>
        <acronym>FMRD</acronym>
        <description>A severe autosomal recessive metabolic disorder characterized by early-onset hypotonia, profound psychomotor retardation, and brain abnormalities, such as agenesis of the corpus callosum, gyral defects, and ventriculomegaly. Many patients show neonatal distress, metabolic acidosis, and/or encephalopathy.</description>
        <dbReference type="MIM" id="606812"/>
    </disease>
    <text>The disease is caused by variants affecting the gene represented in this entry.</text>
</comment>
<comment type="disease" evidence="5 9 13">
    <molecule>Isoform Cytoplasmic</molecule>
    <disease id="DI-02003">
        <name>Hereditary leiomyomatosis and renal cell cancer</name>
        <acronym>HLRCC</acronym>
        <description>A disorder characterized by predisposition to cutaneous and uterine leiomyomas, and papillary type 2 renal cancer which occurs in about 20% of patients.</description>
        <dbReference type="MIM" id="150800"/>
    </disease>
    <text evidence="11">The disease is caused by variants affecting the gene represented in this entry. Isoform Cytoplasmic: HLRCC is probably caused by an accumulation of fumarate (PubMed:30718813). Accumulation of fumarate coupled with protonation promotes the formation of non-enzymatic post-translational modification cysteine S-succination (S-(2-succinyl)cysteine) on proteins, such as SMARCC1 (PubMed:30718813).</text>
</comment>
<comment type="miscellaneous">
    <text evidence="1 4">There are 2 substrate-binding sites: the catalytic A site, and the non-catalytic B site that may play a role in the transfer of substrate or product between the active site and the solvent. Alternatively, the B site may bind allosteric effectors.</text>
</comment>
<comment type="similarity">
    <text evidence="21">Belongs to the class-II fumarase/aspartase family. Fumarase subfamily.</text>
</comment>
<comment type="online information" name="TCA Cycle Gene Mutation Database">
    <link uri="https://databases.lovd.nl/shared/genes/FH"/>
</comment>
<comment type="online information" name="Atlas of Genetics and Cytogenetics in Oncology and Haematology">
    <link uri="https://atlasgeneticsoncology.org/gene/40573/FH"/>
</comment>
<feature type="transit peptide" description="Mitochondrion" evidence="2">
    <location>
        <begin position="1"/>
        <end position="44"/>
    </location>
</feature>
<feature type="chain" id="PRO_0000010319" description="Fumarate hydratase, mitochondrial">
    <location>
        <begin position="45"/>
        <end position="510"/>
    </location>
</feature>
<feature type="active site" description="Proton donor/acceptor" evidence="1">
    <location>
        <position position="235"/>
    </location>
</feature>
<feature type="active site" evidence="4">
    <location>
        <position position="365"/>
    </location>
</feature>
<feature type="binding site" evidence="1">
    <location>
        <begin position="145"/>
        <end position="147"/>
    </location>
    <ligand>
        <name>substrate</name>
    </ligand>
</feature>
<feature type="binding site" description="in site B" evidence="1">
    <location>
        <begin position="176"/>
        <end position="179"/>
    </location>
    <ligand>
        <name>substrate</name>
    </ligand>
</feature>
<feature type="binding site" evidence="1">
    <location>
        <begin position="186"/>
        <end position="188"/>
    </location>
    <ligand>
        <name>substrate</name>
    </ligand>
</feature>
<feature type="binding site" evidence="4">
    <location>
        <position position="234"/>
    </location>
    <ligand>
        <name>substrate</name>
    </ligand>
</feature>
<feature type="binding site" evidence="4">
    <location>
        <position position="366"/>
    </location>
    <ligand>
        <name>substrate</name>
    </ligand>
</feature>
<feature type="binding site" evidence="4">
    <location>
        <begin position="371"/>
        <end position="373"/>
    </location>
    <ligand>
        <name>substrate</name>
    </ligand>
</feature>
<feature type="site" description="Important for catalytic activity" evidence="1">
    <location>
        <position position="378"/>
    </location>
</feature>
<feature type="modified residue" description="N6-acetyllysine; alternate" evidence="3">
    <location>
        <position position="61"/>
    </location>
</feature>
<feature type="modified residue" description="N6-succinyllysine; alternate" evidence="3">
    <location>
        <position position="61"/>
    </location>
</feature>
<feature type="modified residue" description="N6-acetyllysine; alternate" evidence="27">
    <location>
        <position position="66"/>
    </location>
</feature>
<feature type="modified residue" description="N6-succinyllysine; alternate" evidence="3">
    <location>
        <position position="66"/>
    </location>
</feature>
<feature type="modified residue" description="N6-acetyllysine; alternate" evidence="27">
    <location>
        <position position="80"/>
    </location>
</feature>
<feature type="modified residue" description="N6-succinyllysine; alternate" evidence="3">
    <location>
        <position position="80"/>
    </location>
</feature>
<feature type="modified residue" description="Phosphothreonine" evidence="3">
    <location>
        <position position="85"/>
    </location>
</feature>
<feature type="modified residue" description="Phosphothreonine" evidence="28">
    <location>
        <position position="90"/>
    </location>
</feature>
<feature type="modified residue" description="N6-acetyllysine" evidence="27">
    <location>
        <position position="94"/>
    </location>
</feature>
<feature type="modified residue" description="N6-acetyllysine; alternate" evidence="3">
    <location>
        <position position="115"/>
    </location>
</feature>
<feature type="modified residue" description="N6-succinyllysine; alternate" evidence="3">
    <location>
        <position position="115"/>
    </location>
</feature>
<feature type="modified residue" description="N6-acetyllysine; alternate" evidence="3">
    <location>
        <position position="122"/>
    </location>
</feature>
<feature type="modified residue" description="N6-succinyllysine; alternate" evidence="3">
    <location>
        <position position="122"/>
    </location>
</feature>
<feature type="modified residue" description="N6-acetyllysine" evidence="3">
    <location>
        <position position="213"/>
    </location>
</feature>
<feature type="modified residue" description="N6-acetyllysine; alternate" evidence="3">
    <location>
        <position position="223"/>
    </location>
</feature>
<feature type="modified residue" description="N6-succinyllysine; alternate" evidence="3">
    <location>
        <position position="223"/>
    </location>
</feature>
<feature type="modified residue" description="Phosphothreonine; by PRKDC" evidence="9">
    <location>
        <position position="236"/>
    </location>
</feature>
<feature type="modified residue" description="N6-acetyllysine" evidence="27">
    <location>
        <position position="256"/>
    </location>
</feature>
<feature type="modified residue" description="N6-acetyllysine; alternate" evidence="27">
    <location>
        <position position="292"/>
    </location>
</feature>
<feature type="modified residue" description="N6-succinyllysine; alternate" evidence="3">
    <location>
        <position position="292"/>
    </location>
</feature>
<feature type="modified residue" description="Phosphoserine" evidence="29">
    <location>
        <position position="366"/>
    </location>
</feature>
<feature type="modified residue" description="N6-succinyllysine" evidence="3">
    <location>
        <position position="467"/>
    </location>
</feature>
<feature type="modified residue" description="N6-succinyllysine" evidence="3">
    <location>
        <position position="473"/>
    </location>
</feature>
<feature type="modified residue" description="N6-acetyllysine" evidence="3">
    <location>
        <position position="502"/>
    </location>
</feature>
<feature type="splice variant" id="VSP_018965" description="In isoform Cytoplasmic." evidence="10">
    <location>
        <begin position="1"/>
        <end position="43"/>
    </location>
</feature>
<feature type="sequence variant" id="VAR_013497" description="In HLRCC; dbSNP:rs121913121." evidence="5">
    <original>N</original>
    <variation>T</variation>
    <location>
        <position position="107"/>
    </location>
</feature>
<feature type="sequence variant" id="VAR_013498" description="In HLRCC; dbSNP:rs886039363." evidence="5">
    <original>A</original>
    <variation>P</variation>
    <location>
        <position position="117"/>
    </location>
</feature>
<feature type="sequence variant" id="VAR_013499" description="In HLRCC; dbSNP:rs863224015." evidence="5">
    <original>H</original>
    <variation>R</variation>
    <location>
        <position position="180"/>
    </location>
</feature>
<feature type="sequence variant" id="VAR_013500" description="In HLRCC; dbSNP:rs779707997." evidence="5">
    <original>Q</original>
    <variation>R</variation>
    <location>
        <position position="185"/>
    </location>
</feature>
<feature type="sequence variant" id="VAR_002445" description="In FMRD and HLRCC; dbSNP:rs752232718." evidence="5 14">
    <original>K</original>
    <variation>R</variation>
    <location>
        <position position="230"/>
    </location>
</feature>
<feature type="sequence variant" id="VAR_013501" description="In HLRCC; catalytically inactive mutant; abolished ability to promote DNA repair; dbSNP:rs121913123." evidence="5 9">
    <original>R</original>
    <variation>H</variation>
    <location>
        <position position="233"/>
    </location>
</feature>
<feature type="sequence variant" id="VAR_013502" description="In HLRCC; dbSNP:rs935002190." evidence="5">
    <original>G</original>
    <variation>V</variation>
    <location>
        <position position="282"/>
    </location>
</feature>
<feature type="sequence variant" id="VAR_002446" description="In FMRD; dbSNP:rs121913118." evidence="14 15">
    <original>A</original>
    <variation>T</variation>
    <location>
        <position position="308"/>
    </location>
</feature>
<feature type="sequence variant" id="VAR_002447" description="In FMRD; dbSNP:rs1553341046." evidence="14">
    <original>F</original>
    <variation>C</variation>
    <location>
        <position position="312"/>
    </location>
</feature>
<feature type="sequence variant" id="VAR_013503" description="In HLRCC; dbSNP:rs2147916225." evidence="5">
    <original>M</original>
    <variation>R</variation>
    <location>
        <position position="328"/>
    </location>
</feature>
<feature type="sequence variant" id="VAR_081606" description="In HLRCC; dbSNP:rs121913119." evidence="13">
    <original>E</original>
    <variation>Q</variation>
    <location>
        <position position="362"/>
    </location>
</feature>
<feature type="sequence variant" id="VAR_002448" description="In FMRD; dbSNP:rs1038324354." evidence="14">
    <original>D</original>
    <variation>V</variation>
    <location>
        <position position="425"/>
    </location>
</feature>
<feature type="mutagenesis site" description="Does not affect phosphorylation by PRKDC." evidence="9">
    <original>S</original>
    <variation>A</variation>
    <location>
        <position position="46"/>
    </location>
</feature>
<feature type="mutagenesis site" description="Does not affect phosphorylation by PRKDC." evidence="9">
    <original>T</original>
    <variation>A</variation>
    <location>
        <position position="147"/>
    </location>
</feature>
<feature type="mutagenesis site" description="Does not affect phosphorylation by PRKDC." evidence="9">
    <original>S</original>
    <variation>A</variation>
    <location>
        <position position="187"/>
    </location>
</feature>
<feature type="mutagenesis site" description="Abolished interaction with H2AZ1 and localization to chromatin in response to DNA damage." evidence="9">
    <original>T</original>
    <variation>A</variation>
    <location>
        <position position="236"/>
    </location>
</feature>
<feature type="mutagenesis site" description="Phosphomimetic mutant; promotes interaction with H2AZ1, leading to increased localization to chromatin in response to DNA damage." evidence="9">
    <original>T</original>
    <variation>D</variation>
    <location>
        <position position="236"/>
    </location>
</feature>
<feature type="strand" evidence="31">
    <location>
        <begin position="50"/>
        <end position="55"/>
    </location>
</feature>
<feature type="strand" evidence="31">
    <location>
        <begin position="58"/>
        <end position="63"/>
    </location>
</feature>
<feature type="helix" evidence="31">
    <location>
        <begin position="70"/>
        <end position="78"/>
    </location>
</feature>
<feature type="helix" evidence="31">
    <location>
        <begin position="84"/>
        <end position="86"/>
    </location>
</feature>
<feature type="helix" evidence="31">
    <location>
        <begin position="90"/>
        <end position="107"/>
    </location>
</feature>
<feature type="helix" evidence="31">
    <location>
        <begin position="108"/>
        <end position="110"/>
    </location>
</feature>
<feature type="helix" evidence="31">
    <location>
        <begin position="114"/>
        <end position="128"/>
    </location>
</feature>
<feature type="turn" evidence="32">
    <location>
        <begin position="129"/>
        <end position="132"/>
    </location>
</feature>
<feature type="helix" evidence="31">
    <location>
        <begin position="133"/>
        <end position="135"/>
    </location>
</feature>
<feature type="strand" evidence="31">
    <location>
        <begin position="139"/>
        <end position="142"/>
    </location>
</feature>
<feature type="helix" evidence="31">
    <location>
        <begin position="147"/>
        <end position="164"/>
    </location>
</feature>
<feature type="helix" evidence="31">
    <location>
        <begin position="177"/>
        <end position="181"/>
    </location>
</feature>
<feature type="turn" evidence="31">
    <location>
        <begin position="182"/>
        <end position="184"/>
    </location>
</feature>
<feature type="turn" evidence="31">
    <location>
        <begin position="187"/>
        <end position="189"/>
    </location>
</feature>
<feature type="helix" evidence="31">
    <location>
        <begin position="190"/>
        <end position="205"/>
    </location>
</feature>
<feature type="helix" evidence="31">
    <location>
        <begin position="207"/>
        <end position="224"/>
    </location>
</feature>
<feature type="turn" evidence="31">
    <location>
        <begin position="225"/>
        <end position="227"/>
    </location>
</feature>
<feature type="strand" evidence="31">
    <location>
        <begin position="229"/>
        <end position="234"/>
    </location>
</feature>
<feature type="strand" evidence="31">
    <location>
        <begin position="237"/>
        <end position="243"/>
    </location>
</feature>
<feature type="helix" evidence="31">
    <location>
        <begin position="244"/>
        <end position="264"/>
    </location>
</feature>
<feature type="turn" evidence="31">
    <location>
        <begin position="267"/>
        <end position="270"/>
    </location>
</feature>
<feature type="turn" evidence="31">
    <location>
        <begin position="277"/>
        <end position="279"/>
    </location>
</feature>
<feature type="helix" evidence="31">
    <location>
        <begin position="289"/>
        <end position="301"/>
    </location>
</feature>
<feature type="helix" evidence="31">
    <location>
        <begin position="311"/>
        <end position="316"/>
    </location>
</feature>
<feature type="helix" evidence="31">
    <location>
        <begin position="319"/>
        <end position="345"/>
    </location>
</feature>
<feature type="strand" evidence="31">
    <location>
        <begin position="349"/>
        <end position="352"/>
    </location>
</feature>
<feature type="strand" evidence="30">
    <location>
        <begin position="366"/>
        <end position="368"/>
    </location>
</feature>
<feature type="helix" evidence="31">
    <location>
        <begin position="375"/>
        <end position="399"/>
    </location>
</feature>
<feature type="helix" evidence="31">
    <location>
        <begin position="409"/>
        <end position="433"/>
    </location>
</feature>
<feature type="helix" evidence="31">
    <location>
        <begin position="435"/>
        <end position="437"/>
    </location>
</feature>
<feature type="helix" evidence="31">
    <location>
        <begin position="442"/>
        <end position="451"/>
    </location>
</feature>
<feature type="helix" evidence="31">
    <location>
        <begin position="454"/>
        <end position="459"/>
    </location>
</feature>
<feature type="helix" evidence="31">
    <location>
        <begin position="460"/>
        <end position="463"/>
    </location>
</feature>
<feature type="helix" evidence="31">
    <location>
        <begin position="465"/>
        <end position="478"/>
    </location>
</feature>
<feature type="helix" evidence="31">
    <location>
        <begin position="482"/>
        <end position="488"/>
    </location>
</feature>
<feature type="helix" evidence="31">
    <location>
        <begin position="494"/>
        <end position="500"/>
    </location>
</feature>
<feature type="helix" evidence="31">
    <location>
        <begin position="503"/>
        <end position="505"/>
    </location>
</feature>
<feature type="strand" evidence="31">
    <location>
        <begin position="506"/>
        <end position="508"/>
    </location>
</feature>
<feature type="initiator methionine" description="Removed" evidence="10">
    <location sequence="P07954-2">
        <position position="1"/>
    </location>
</feature>
<dbReference type="EC" id="4.2.1.2" evidence="12"/>
<dbReference type="EMBL" id="U59309">
    <property type="protein sequence ID" value="AAB66354.1"/>
    <property type="molecule type" value="mRNA"/>
</dbReference>
<dbReference type="EMBL" id="U48857">
    <property type="protein sequence ID" value="AAD00071.1"/>
    <property type="molecule type" value="mRNA"/>
</dbReference>
<dbReference type="EMBL" id="BT009839">
    <property type="protein sequence ID" value="AAP88841.1"/>
    <property type="molecule type" value="mRNA"/>
</dbReference>
<dbReference type="EMBL" id="AK312415">
    <property type="protein sequence ID" value="BAG35325.1"/>
    <property type="molecule type" value="mRNA"/>
</dbReference>
<dbReference type="EMBL" id="CH471098">
    <property type="protein sequence ID" value="EAW70092.1"/>
    <property type="molecule type" value="Genomic_DNA"/>
</dbReference>
<dbReference type="EMBL" id="BC003108">
    <property type="protein sequence ID" value="AAH03108.1"/>
    <property type="molecule type" value="mRNA"/>
</dbReference>
<dbReference type="EMBL" id="BC017444">
    <property type="protein sequence ID" value="AAH17444.1"/>
    <property type="molecule type" value="mRNA"/>
</dbReference>
<dbReference type="EMBL" id="M15502">
    <property type="protein sequence ID" value="AAA52483.1"/>
    <property type="molecule type" value="mRNA"/>
</dbReference>
<dbReference type="CCDS" id="CCDS1617.1">
    <molecule id="P07954-1"/>
</dbReference>
<dbReference type="PIR" id="S06213">
    <property type="entry name" value="UFHUM"/>
</dbReference>
<dbReference type="RefSeq" id="NP_000134.2">
    <molecule id="P07954-1"/>
    <property type="nucleotide sequence ID" value="NM_000143.3"/>
</dbReference>
<dbReference type="PDB" id="3E04">
    <property type="method" value="X-ray"/>
    <property type="resolution" value="1.95 A"/>
    <property type="chains" value="A/B/C/D=44-510"/>
</dbReference>
<dbReference type="PDB" id="5D6B">
    <property type="method" value="X-ray"/>
    <property type="resolution" value="2.10 A"/>
    <property type="chains" value="A=49-510"/>
</dbReference>
<dbReference type="PDB" id="5UPP">
    <property type="method" value="X-ray"/>
    <property type="resolution" value="1.80 A"/>
    <property type="chains" value="A/B=45-510"/>
</dbReference>
<dbReference type="PDB" id="6EBT">
    <property type="method" value="X-ray"/>
    <property type="resolution" value="2.30 A"/>
    <property type="chains" value="A/B=45-510"/>
</dbReference>
<dbReference type="PDB" id="6V8F">
    <property type="method" value="X-ray"/>
    <property type="resolution" value="2.30 A"/>
    <property type="chains" value="A/B=45-510"/>
</dbReference>
<dbReference type="PDB" id="6VBE">
    <property type="method" value="X-ray"/>
    <property type="resolution" value="1.90 A"/>
    <property type="chains" value="A/B=45-510"/>
</dbReference>
<dbReference type="PDB" id="7LUB">
    <property type="method" value="X-ray"/>
    <property type="resolution" value="2.15 A"/>
    <property type="chains" value="A/B=45-510"/>
</dbReference>
<dbReference type="PDBsum" id="3E04"/>
<dbReference type="PDBsum" id="5D6B"/>
<dbReference type="PDBsum" id="5UPP"/>
<dbReference type="PDBsum" id="6EBT"/>
<dbReference type="PDBsum" id="6V8F"/>
<dbReference type="PDBsum" id="6VBE"/>
<dbReference type="PDBsum" id="7LUB"/>
<dbReference type="SMR" id="P07954"/>
<dbReference type="BioGRID" id="108562">
    <property type="interactions" value="199"/>
</dbReference>
<dbReference type="DIP" id="DIP-46920N"/>
<dbReference type="FunCoup" id="P07954">
    <property type="interactions" value="1525"/>
</dbReference>
<dbReference type="IntAct" id="P07954">
    <property type="interactions" value="52"/>
</dbReference>
<dbReference type="MINT" id="P07954"/>
<dbReference type="STRING" id="9606.ENSP00000355518"/>
<dbReference type="GlyCosmos" id="P07954">
    <property type="glycosylation" value="1 site, 1 glycan"/>
</dbReference>
<dbReference type="GlyGen" id="P07954">
    <property type="glycosylation" value="2 sites, 1 O-linked glycan (1 site)"/>
</dbReference>
<dbReference type="iPTMnet" id="P07954"/>
<dbReference type="MetOSite" id="P07954"/>
<dbReference type="PhosphoSitePlus" id="P07954"/>
<dbReference type="SwissPalm" id="P07954"/>
<dbReference type="BioMuta" id="FH"/>
<dbReference type="DMDM" id="1730117"/>
<dbReference type="REPRODUCTION-2DPAGE" id="IPI00296053"/>
<dbReference type="CPTAC" id="CPTAC-2732"/>
<dbReference type="jPOST" id="P07954"/>
<dbReference type="MassIVE" id="P07954"/>
<dbReference type="PaxDb" id="9606-ENSP00000355518"/>
<dbReference type="PeptideAtlas" id="P07954"/>
<dbReference type="ProteomicsDB" id="52052">
    <molecule id="P07954-1"/>
</dbReference>
<dbReference type="ProteomicsDB" id="52053">
    <molecule id="P07954-2"/>
</dbReference>
<dbReference type="Pumba" id="P07954"/>
<dbReference type="TopDownProteomics" id="P07954-2">
    <molecule id="P07954-2"/>
</dbReference>
<dbReference type="Antibodypedia" id="34701">
    <property type="antibodies" value="675 antibodies from 41 providers"/>
</dbReference>
<dbReference type="CPTC" id="P07954">
    <property type="antibodies" value="1 antibody"/>
</dbReference>
<dbReference type="DNASU" id="2271"/>
<dbReference type="Ensembl" id="ENST00000366560.4">
    <molecule id="P07954-1"/>
    <property type="protein sequence ID" value="ENSP00000355518.4"/>
    <property type="gene ID" value="ENSG00000091483.8"/>
</dbReference>
<dbReference type="GeneID" id="2271"/>
<dbReference type="KEGG" id="hsa:2271"/>
<dbReference type="MANE-Select" id="ENST00000366560.4">
    <property type="protein sequence ID" value="ENSP00000355518.4"/>
    <property type="RefSeq nucleotide sequence ID" value="NM_000143.4"/>
    <property type="RefSeq protein sequence ID" value="NP_000134.2"/>
</dbReference>
<dbReference type="UCSC" id="uc001hyx.4">
    <molecule id="P07954-1"/>
    <property type="organism name" value="human"/>
</dbReference>
<dbReference type="AGR" id="HGNC:3700"/>
<dbReference type="CTD" id="2271"/>
<dbReference type="DisGeNET" id="2271"/>
<dbReference type="GeneCards" id="FH"/>
<dbReference type="GeneReviews" id="FH"/>
<dbReference type="HGNC" id="HGNC:3700">
    <property type="gene designation" value="FH"/>
</dbReference>
<dbReference type="HPA" id="ENSG00000091483">
    <property type="expression patterns" value="Tissue enhanced (liver)"/>
</dbReference>
<dbReference type="MalaCards" id="FH"/>
<dbReference type="MIM" id="136850">
    <property type="type" value="gene"/>
</dbReference>
<dbReference type="MIM" id="150800">
    <property type="type" value="phenotype"/>
</dbReference>
<dbReference type="MIM" id="606812">
    <property type="type" value="phenotype"/>
</dbReference>
<dbReference type="neXtProt" id="NX_P07954"/>
<dbReference type="OpenTargets" id="ENSG00000091483"/>
<dbReference type="Orphanet" id="24">
    <property type="disease" value="Fumaric aciduria"/>
</dbReference>
<dbReference type="Orphanet" id="523">
    <property type="disease" value="Hereditary leiomyomatosis and renal cell cancer"/>
</dbReference>
<dbReference type="Orphanet" id="29072">
    <property type="disease" value="Hereditary pheochromocytoma-paraganglioma"/>
</dbReference>
<dbReference type="PharmGKB" id="PA28139"/>
<dbReference type="VEuPathDB" id="HostDB:ENSG00000091483"/>
<dbReference type="eggNOG" id="KOG1317">
    <property type="taxonomic scope" value="Eukaryota"/>
</dbReference>
<dbReference type="GeneTree" id="ENSGT00950000183122"/>
<dbReference type="HOGENOM" id="CLU_021594_4_1_1"/>
<dbReference type="InParanoid" id="P07954"/>
<dbReference type="OMA" id="AKWRAQT"/>
<dbReference type="OrthoDB" id="1738025at2759"/>
<dbReference type="PAN-GO" id="P07954">
    <property type="GO annotations" value="5 GO annotations based on evolutionary models"/>
</dbReference>
<dbReference type="PhylomeDB" id="P07954"/>
<dbReference type="TreeFam" id="TF300441"/>
<dbReference type="BioCyc" id="MetaCyc:ENSG00000091483-MONOMER"/>
<dbReference type="BRENDA" id="4.2.1.2">
    <property type="organism ID" value="2681"/>
</dbReference>
<dbReference type="PathwayCommons" id="P07954"/>
<dbReference type="Reactome" id="R-HSA-71403">
    <property type="pathway name" value="Citric acid cycle (TCA cycle)"/>
</dbReference>
<dbReference type="Reactome" id="R-HSA-9837999">
    <property type="pathway name" value="Mitochondrial protein degradation"/>
</dbReference>
<dbReference type="SABIO-RK" id="P07954"/>
<dbReference type="SignaLink" id="P07954"/>
<dbReference type="SIGNOR" id="P07954"/>
<dbReference type="UniPathway" id="UPA00223">
    <property type="reaction ID" value="UER01007"/>
</dbReference>
<dbReference type="BioGRID-ORCS" id="2271">
    <property type="hits" value="140 hits in 1169 CRISPR screens"/>
</dbReference>
<dbReference type="CD-CODE" id="FB4E32DD">
    <property type="entry name" value="Presynaptic clusters and postsynaptic densities"/>
</dbReference>
<dbReference type="EvolutionaryTrace" id="P07954"/>
<dbReference type="GenomeRNAi" id="2271"/>
<dbReference type="Pharos" id="P07954">
    <property type="development level" value="Tbio"/>
</dbReference>
<dbReference type="PRO" id="PR:P07954"/>
<dbReference type="Proteomes" id="UP000005640">
    <property type="component" value="Chromosome 1"/>
</dbReference>
<dbReference type="RNAct" id="P07954">
    <property type="molecule type" value="protein"/>
</dbReference>
<dbReference type="Bgee" id="ENSG00000091483">
    <property type="expression patterns" value="Expressed in heart right ventricle and 212 other cell types or tissues"/>
</dbReference>
<dbReference type="ExpressionAtlas" id="P07954">
    <property type="expression patterns" value="baseline and differential"/>
</dbReference>
<dbReference type="GO" id="GO:0005694">
    <property type="term" value="C:chromosome"/>
    <property type="evidence" value="ECO:0007669"/>
    <property type="project" value="UniProtKB-SubCell"/>
</dbReference>
<dbReference type="GO" id="GO:0005737">
    <property type="term" value="C:cytoplasm"/>
    <property type="evidence" value="ECO:0000314"/>
    <property type="project" value="UniProtKB"/>
</dbReference>
<dbReference type="GO" id="GO:0005829">
    <property type="term" value="C:cytosol"/>
    <property type="evidence" value="ECO:0000314"/>
    <property type="project" value="UniProtKB"/>
</dbReference>
<dbReference type="GO" id="GO:0070062">
    <property type="term" value="C:extracellular exosome"/>
    <property type="evidence" value="ECO:0007005"/>
    <property type="project" value="UniProtKB"/>
</dbReference>
<dbReference type="GO" id="GO:0005759">
    <property type="term" value="C:mitochondrial matrix"/>
    <property type="evidence" value="ECO:0000304"/>
    <property type="project" value="Reactome"/>
</dbReference>
<dbReference type="GO" id="GO:0005739">
    <property type="term" value="C:mitochondrion"/>
    <property type="evidence" value="ECO:0000314"/>
    <property type="project" value="UniProtKB"/>
</dbReference>
<dbReference type="GO" id="GO:0005634">
    <property type="term" value="C:nucleus"/>
    <property type="evidence" value="ECO:0000314"/>
    <property type="project" value="UniProtKB"/>
</dbReference>
<dbReference type="GO" id="GO:0035861">
    <property type="term" value="C:site of double-strand break"/>
    <property type="evidence" value="ECO:0000314"/>
    <property type="project" value="UniProtKB"/>
</dbReference>
<dbReference type="GO" id="GO:0004333">
    <property type="term" value="F:fumarate hydratase activity"/>
    <property type="evidence" value="ECO:0000314"/>
    <property type="project" value="UniProtKB"/>
</dbReference>
<dbReference type="GO" id="GO:0042393">
    <property type="term" value="F:histone binding"/>
    <property type="evidence" value="ECO:0000353"/>
    <property type="project" value="UniProtKB"/>
</dbReference>
<dbReference type="GO" id="GO:0006525">
    <property type="term" value="P:arginine metabolic process"/>
    <property type="evidence" value="ECO:0000250"/>
    <property type="project" value="UniProtKB"/>
</dbReference>
<dbReference type="GO" id="GO:0006974">
    <property type="term" value="P:DNA damage response"/>
    <property type="evidence" value="ECO:0000314"/>
    <property type="project" value="UniProtKB"/>
</dbReference>
<dbReference type="GO" id="GO:0006281">
    <property type="term" value="P:DNA repair"/>
    <property type="evidence" value="ECO:0007669"/>
    <property type="project" value="UniProtKB-KW"/>
</dbReference>
<dbReference type="GO" id="GO:0006106">
    <property type="term" value="P:fumarate metabolic process"/>
    <property type="evidence" value="ECO:0000314"/>
    <property type="project" value="UniProtKB"/>
</dbReference>
<dbReference type="GO" id="GO:0048873">
    <property type="term" value="P:homeostasis of number of cells within a tissue"/>
    <property type="evidence" value="ECO:0007669"/>
    <property type="project" value="Ensembl"/>
</dbReference>
<dbReference type="GO" id="GO:0006108">
    <property type="term" value="P:malate metabolic process"/>
    <property type="evidence" value="ECO:0000314"/>
    <property type="project" value="UniProtKB"/>
</dbReference>
<dbReference type="GO" id="GO:0120162">
    <property type="term" value="P:positive regulation of cold-induced thermogenesis"/>
    <property type="evidence" value="ECO:0000250"/>
    <property type="project" value="YuBioLab"/>
</dbReference>
<dbReference type="GO" id="GO:2001034">
    <property type="term" value="P:positive regulation of double-strand break repair via nonhomologous end joining"/>
    <property type="evidence" value="ECO:0000314"/>
    <property type="project" value="UniProtKB"/>
</dbReference>
<dbReference type="GO" id="GO:0000821">
    <property type="term" value="P:regulation of arginine metabolic process"/>
    <property type="evidence" value="ECO:0000250"/>
    <property type="project" value="UniProtKB"/>
</dbReference>
<dbReference type="GO" id="GO:0006099">
    <property type="term" value="P:tricarboxylic acid cycle"/>
    <property type="evidence" value="ECO:0000318"/>
    <property type="project" value="GO_Central"/>
</dbReference>
<dbReference type="GO" id="GO:0000050">
    <property type="term" value="P:urea cycle"/>
    <property type="evidence" value="ECO:0000250"/>
    <property type="project" value="UniProtKB"/>
</dbReference>
<dbReference type="CDD" id="cd01362">
    <property type="entry name" value="Fumarase_classII"/>
    <property type="match status" value="1"/>
</dbReference>
<dbReference type="FunFam" id="1.10.40.30:FF:000002">
    <property type="entry name" value="Fumarate hydratase class II"/>
    <property type="match status" value="1"/>
</dbReference>
<dbReference type="FunFam" id="1.10.275.10:FF:000001">
    <property type="entry name" value="Fumarate hydratase, mitochondrial"/>
    <property type="match status" value="1"/>
</dbReference>
<dbReference type="FunFam" id="1.20.200.10:FF:000001">
    <property type="entry name" value="Fumarate hydratase, mitochondrial"/>
    <property type="match status" value="1"/>
</dbReference>
<dbReference type="Gene3D" id="1.10.40.30">
    <property type="entry name" value="Fumarase/aspartase (C-terminal domain)"/>
    <property type="match status" value="1"/>
</dbReference>
<dbReference type="Gene3D" id="1.20.200.10">
    <property type="entry name" value="Fumarase/aspartase (Central domain)"/>
    <property type="match status" value="1"/>
</dbReference>
<dbReference type="Gene3D" id="1.10.275.10">
    <property type="entry name" value="Fumarase/aspartase (N-terminal domain)"/>
    <property type="match status" value="1"/>
</dbReference>
<dbReference type="HAMAP" id="MF_00743">
    <property type="entry name" value="FumaraseC"/>
    <property type="match status" value="1"/>
</dbReference>
<dbReference type="InterPro" id="IPR005677">
    <property type="entry name" value="Fum_hydII"/>
</dbReference>
<dbReference type="InterPro" id="IPR024083">
    <property type="entry name" value="Fumarase/histidase_N"/>
</dbReference>
<dbReference type="InterPro" id="IPR018951">
    <property type="entry name" value="Fumarase_C_C"/>
</dbReference>
<dbReference type="InterPro" id="IPR020557">
    <property type="entry name" value="Fumarate_lyase_CS"/>
</dbReference>
<dbReference type="InterPro" id="IPR000362">
    <property type="entry name" value="Fumarate_lyase_fam"/>
</dbReference>
<dbReference type="InterPro" id="IPR022761">
    <property type="entry name" value="Fumarate_lyase_N"/>
</dbReference>
<dbReference type="InterPro" id="IPR008948">
    <property type="entry name" value="L-Aspartase-like"/>
</dbReference>
<dbReference type="NCBIfam" id="TIGR00979">
    <property type="entry name" value="fumC_II"/>
    <property type="match status" value="1"/>
</dbReference>
<dbReference type="NCBIfam" id="NF008909">
    <property type="entry name" value="PRK12273.1"/>
    <property type="match status" value="1"/>
</dbReference>
<dbReference type="PANTHER" id="PTHR11444">
    <property type="entry name" value="ASPARTATEAMMONIA/ARGININOSUCCINATE/ADENYLOSUCCINATE LYASE"/>
    <property type="match status" value="1"/>
</dbReference>
<dbReference type="PANTHER" id="PTHR11444:SF1">
    <property type="entry name" value="FUMARATE HYDRATASE, MITOCHONDRIAL"/>
    <property type="match status" value="1"/>
</dbReference>
<dbReference type="Pfam" id="PF10415">
    <property type="entry name" value="FumaraseC_C"/>
    <property type="match status" value="1"/>
</dbReference>
<dbReference type="Pfam" id="PF00206">
    <property type="entry name" value="Lyase_1"/>
    <property type="match status" value="1"/>
</dbReference>
<dbReference type="PRINTS" id="PR00149">
    <property type="entry name" value="FUMRATELYASE"/>
</dbReference>
<dbReference type="SUPFAM" id="SSF48557">
    <property type="entry name" value="L-aspartase-like"/>
    <property type="match status" value="1"/>
</dbReference>
<dbReference type="PROSITE" id="PS00163">
    <property type="entry name" value="FUMARATE_LYASES"/>
    <property type="match status" value="1"/>
</dbReference>
<evidence type="ECO:0000250" key="1">
    <source>
        <dbReference type="UniProtKB" id="P05042"/>
    </source>
</evidence>
<evidence type="ECO:0000250" key="2">
    <source>
        <dbReference type="UniProtKB" id="P10173"/>
    </source>
</evidence>
<evidence type="ECO:0000250" key="3">
    <source>
        <dbReference type="UniProtKB" id="P97807"/>
    </source>
</evidence>
<evidence type="ECO:0000250" key="4">
    <source>
        <dbReference type="UniProtKB" id="P9WN93"/>
    </source>
</evidence>
<evidence type="ECO:0000269" key="5">
    <source>
    </source>
</evidence>
<evidence type="ECO:0000269" key="6">
    <source>
    </source>
</evidence>
<evidence type="ECO:0000269" key="7">
    <source>
    </source>
</evidence>
<evidence type="ECO:0000269" key="8">
    <source>
    </source>
</evidence>
<evidence type="ECO:0000269" key="9">
    <source>
    </source>
</evidence>
<evidence type="ECO:0000269" key="10">
    <source>
    </source>
</evidence>
<evidence type="ECO:0000269" key="11">
    <source>
    </source>
</evidence>
<evidence type="ECO:0000269" key="12">
    <source>
    </source>
</evidence>
<evidence type="ECO:0000269" key="13">
    <source>
    </source>
</evidence>
<evidence type="ECO:0000269" key="14">
    <source>
    </source>
</evidence>
<evidence type="ECO:0000269" key="15">
    <source ref="23"/>
</evidence>
<evidence type="ECO:0000303" key="16">
    <source>
    </source>
</evidence>
<evidence type="ECO:0000303" key="17">
    <source>
    </source>
</evidence>
<evidence type="ECO:0000303" key="18">
    <source>
    </source>
</evidence>
<evidence type="ECO:0000303" key="19">
    <source>
    </source>
</evidence>
<evidence type="ECO:0000303" key="20">
    <source ref="2"/>
</evidence>
<evidence type="ECO:0000305" key="21"/>
<evidence type="ECO:0000305" key="22">
    <source>
    </source>
</evidence>
<evidence type="ECO:0000312" key="23">
    <source>
        <dbReference type="HGNC" id="HGNC:3700"/>
    </source>
</evidence>
<evidence type="ECO:0007744" key="24">
    <source>
        <dbReference type="PDB" id="3E04"/>
    </source>
</evidence>
<evidence type="ECO:0007744" key="25">
    <source>
        <dbReference type="PDB" id="5D6B"/>
    </source>
</evidence>
<evidence type="ECO:0007744" key="26">
    <source>
        <dbReference type="PDB" id="5UPP"/>
    </source>
</evidence>
<evidence type="ECO:0007744" key="27">
    <source>
    </source>
</evidence>
<evidence type="ECO:0007744" key="28">
    <source>
    </source>
</evidence>
<evidence type="ECO:0007744" key="29">
    <source>
    </source>
</evidence>
<evidence type="ECO:0007829" key="30">
    <source>
        <dbReference type="PDB" id="3E04"/>
    </source>
</evidence>
<evidence type="ECO:0007829" key="31">
    <source>
        <dbReference type="PDB" id="5UPP"/>
    </source>
</evidence>
<evidence type="ECO:0007829" key="32">
    <source>
        <dbReference type="PDB" id="6VBE"/>
    </source>
</evidence>